<gene>
    <name type="primary">ybdK</name>
    <name type="ordered locus">E2348C_0481</name>
</gene>
<feature type="chain" id="PRO_1000185847" description="Putative glutamate--cysteine ligase 2">
    <location>
        <begin position="1"/>
        <end position="372"/>
    </location>
</feature>
<accession>B7UKM3</accession>
<name>GCS2_ECO27</name>
<dbReference type="EC" id="6.3.2.2" evidence="1"/>
<dbReference type="EMBL" id="FM180568">
    <property type="protein sequence ID" value="CAS08029.1"/>
    <property type="molecule type" value="Genomic_DNA"/>
</dbReference>
<dbReference type="RefSeq" id="WP_001130643.1">
    <property type="nucleotide sequence ID" value="NC_011601.1"/>
</dbReference>
<dbReference type="SMR" id="B7UKM3"/>
<dbReference type="KEGG" id="ecg:E2348C_0481"/>
<dbReference type="HOGENOM" id="CLU_044848_1_1_6"/>
<dbReference type="Proteomes" id="UP000008205">
    <property type="component" value="Chromosome"/>
</dbReference>
<dbReference type="GO" id="GO:0005524">
    <property type="term" value="F:ATP binding"/>
    <property type="evidence" value="ECO:0007669"/>
    <property type="project" value="UniProtKB-KW"/>
</dbReference>
<dbReference type="GO" id="GO:0004357">
    <property type="term" value="F:glutamate-cysteine ligase activity"/>
    <property type="evidence" value="ECO:0007669"/>
    <property type="project" value="UniProtKB-EC"/>
</dbReference>
<dbReference type="GO" id="GO:0042398">
    <property type="term" value="P:modified amino acid biosynthetic process"/>
    <property type="evidence" value="ECO:0007669"/>
    <property type="project" value="InterPro"/>
</dbReference>
<dbReference type="FunFam" id="3.30.590.20:FF:000002">
    <property type="entry name" value="Putative glutamate--cysteine ligase 2"/>
    <property type="match status" value="1"/>
</dbReference>
<dbReference type="Gene3D" id="3.30.590.20">
    <property type="match status" value="1"/>
</dbReference>
<dbReference type="HAMAP" id="MF_01609">
    <property type="entry name" value="Glu_cys_ligase_2"/>
    <property type="match status" value="1"/>
</dbReference>
<dbReference type="InterPro" id="IPR050141">
    <property type="entry name" value="GCL_type2/YbdK_subfam"/>
</dbReference>
<dbReference type="InterPro" id="IPR006336">
    <property type="entry name" value="GCS2"/>
</dbReference>
<dbReference type="InterPro" id="IPR014746">
    <property type="entry name" value="Gln_synth/guanido_kin_cat_dom"/>
</dbReference>
<dbReference type="InterPro" id="IPR011793">
    <property type="entry name" value="YbdK"/>
</dbReference>
<dbReference type="NCBIfam" id="TIGR02050">
    <property type="entry name" value="gshA_cyan_rel"/>
    <property type="match status" value="1"/>
</dbReference>
<dbReference type="NCBIfam" id="NF010040">
    <property type="entry name" value="PRK13516.1"/>
    <property type="match status" value="1"/>
</dbReference>
<dbReference type="PANTHER" id="PTHR36510">
    <property type="entry name" value="GLUTAMATE--CYSTEINE LIGASE 2-RELATED"/>
    <property type="match status" value="1"/>
</dbReference>
<dbReference type="PANTHER" id="PTHR36510:SF1">
    <property type="entry name" value="GLUTAMATE--CYSTEINE LIGASE 2-RELATED"/>
    <property type="match status" value="1"/>
</dbReference>
<dbReference type="Pfam" id="PF04107">
    <property type="entry name" value="GCS2"/>
    <property type="match status" value="1"/>
</dbReference>
<dbReference type="SUPFAM" id="SSF55931">
    <property type="entry name" value="Glutamine synthetase/guanido kinase"/>
    <property type="match status" value="1"/>
</dbReference>
<reference key="1">
    <citation type="journal article" date="2009" name="J. Bacteriol.">
        <title>Complete genome sequence and comparative genome analysis of enteropathogenic Escherichia coli O127:H6 strain E2348/69.</title>
        <authorList>
            <person name="Iguchi A."/>
            <person name="Thomson N.R."/>
            <person name="Ogura Y."/>
            <person name="Saunders D."/>
            <person name="Ooka T."/>
            <person name="Henderson I.R."/>
            <person name="Harris D."/>
            <person name="Asadulghani M."/>
            <person name="Kurokawa K."/>
            <person name="Dean P."/>
            <person name="Kenny B."/>
            <person name="Quail M.A."/>
            <person name="Thurston S."/>
            <person name="Dougan G."/>
            <person name="Hayashi T."/>
            <person name="Parkhill J."/>
            <person name="Frankel G."/>
        </authorList>
    </citation>
    <scope>NUCLEOTIDE SEQUENCE [LARGE SCALE GENOMIC DNA]</scope>
    <source>
        <strain>E2348/69 / EPEC</strain>
    </source>
</reference>
<evidence type="ECO:0000255" key="1">
    <source>
        <dbReference type="HAMAP-Rule" id="MF_01609"/>
    </source>
</evidence>
<keyword id="KW-0067">ATP-binding</keyword>
<keyword id="KW-0436">Ligase</keyword>
<keyword id="KW-0547">Nucleotide-binding</keyword>
<keyword id="KW-1185">Reference proteome</keyword>
<proteinExistence type="inferred from homology"/>
<organism>
    <name type="scientific">Escherichia coli O127:H6 (strain E2348/69 / EPEC)</name>
    <dbReference type="NCBI Taxonomy" id="574521"/>
    <lineage>
        <taxon>Bacteria</taxon>
        <taxon>Pseudomonadati</taxon>
        <taxon>Pseudomonadota</taxon>
        <taxon>Gammaproteobacteria</taxon>
        <taxon>Enterobacterales</taxon>
        <taxon>Enterobacteriaceae</taxon>
        <taxon>Escherichia</taxon>
    </lineage>
</organism>
<sequence length="372" mass="41607">MPLPDFHVSEPFTLGIELEMQVVNPPGYDLSQDSSMLIDAVKNKITAGEVKHDITESMLELATDVCRDINQAAGQFSAMQKVVLQAAADHHLEICGGGTHPFQKWQRQEVCDNERYQRTLENFGYLIQQATVFGQHVHVGCASGDDAIYLLHGLSRFVPHFIALSAASPYMQGTDTRFASSRPNIFSAFPDNGPMPWVSNWQQFEALFRCLSYTTMIDSIKDLHWDIRPSPHFGTVEVRVMDTPLTLSHAVNMAGLIQATAHWLLTERSFKHQEKDYLLYKFNRFQACRYGLEGVITDPHTGDRRSLTEATLRLLEKIAPSAHKIGASSAIEALHRQVVSGLNEAQLMRDFVANGGSLIGLVKKHCEIWAGE</sequence>
<comment type="function">
    <text evidence="1">ATP-dependent carboxylate-amine ligase which exhibits weak glutamate--cysteine ligase activity.</text>
</comment>
<comment type="catalytic activity">
    <reaction evidence="1">
        <text>L-cysteine + L-glutamate + ATP = gamma-L-glutamyl-L-cysteine + ADP + phosphate + H(+)</text>
        <dbReference type="Rhea" id="RHEA:13285"/>
        <dbReference type="ChEBI" id="CHEBI:15378"/>
        <dbReference type="ChEBI" id="CHEBI:29985"/>
        <dbReference type="ChEBI" id="CHEBI:30616"/>
        <dbReference type="ChEBI" id="CHEBI:35235"/>
        <dbReference type="ChEBI" id="CHEBI:43474"/>
        <dbReference type="ChEBI" id="CHEBI:58173"/>
        <dbReference type="ChEBI" id="CHEBI:456216"/>
        <dbReference type="EC" id="6.3.2.2"/>
    </reaction>
</comment>
<comment type="subunit">
    <text evidence="1">Homodimer.</text>
</comment>
<comment type="similarity">
    <text evidence="1">Belongs to the glutamate--cysteine ligase type 2 family. YbdK subfamily.</text>
</comment>
<protein>
    <recommendedName>
        <fullName evidence="1">Putative glutamate--cysteine ligase 2</fullName>
        <ecNumber evidence="1">6.3.2.2</ecNumber>
    </recommendedName>
    <alternativeName>
        <fullName evidence="1">Gamma-glutamylcysteine synthetase 2</fullName>
        <shortName evidence="1">GCS 2</shortName>
        <shortName evidence="1">Gamma-GCS 2</shortName>
    </alternativeName>
</protein>